<comment type="function">
    <text evidence="1">During the asexual blood stage, involved in merozoite egress from host erythrocytes possibly via its interaction with the host cytoskeleton protein spectrin resulting in the destabilization of the host cytoskeleton and thus leading to erythrocyte cell membrane rupture. Involved in the binding to host erythrocytes and is required for host erythrocyte invasion.</text>
</comment>
<comment type="subunit">
    <text evidence="1">Forms a complex composed of subunits p83, p30, p38, and p42 which remain non-covalently associated; the complex is formed at the merozoite surface prior to egress from host erythrocytes. Forms a complex composed of processed MSP1 subunits, MSP6 subunit p36 and MSP7; the complex is formed at the merozoite surface prior to egress from host erythrocytes. Within the complex, interacts (via subunit p38) with MSP6 subunit p36 and (via subunits p83, p30 and p38) with MSP7 (via subunit p22). Forms a complex composed of MSP1, MSP6, DBLMSP1 and DBLMSP2. Within the complex, interacts (via subunit p38) with DBLMSP1 and DBLMSP2. Forms a complex composed of MSP1, and rhoptry proteins RhopH3, RAP1 and CLAG9/RhopH3. Within the complex, interacts (via subunits p42 and p19) with RhopH3 (via C-terminus). Forms a complex composed of MSP1, MSP6, MSP7, MSP9 and MSP3; within the complex, MSP6 and MSP9 mediate the binding to the host erythrocyte. Interacts (via subunits p19 and p42) with MSP9; the interaction is direct; MSP1 subunits p19 or p42, and MSP9 form a co-ligand complex that interacts with host SLC4A1/Band 3 protein. May interact with PFD6. Interacts with host spectrin.</text>
</comment>
<comment type="subcellular location">
    <subcellularLocation>
        <location evidence="1">Cell membrane</location>
        <topology evidence="2">Lipid-anchor</topology>
        <topology evidence="2">GPI-anchor</topology>
    </subcellularLocation>
    <subcellularLocation>
        <location evidence="1">Secreted</location>
    </subcellularLocation>
</comment>
<comment type="PTM">
    <text evidence="1">The p190 precursor is cleaved by SUB1 prior to merozoite egress into 4 subunits p83, p30, p38, and p42 which remain non-covalently associated. SUB1-mediated proteolytic cleavage occurs in an orderly manner; the first cleavage occurs at the p30/p38 site, followed by cleavage at the p83/p30 site, the last cleavage occurs at the p38/p42 site. The order of cleavage is essential for parasite viability. SUB1-mediated processing is essential for merozoite egress. In a second processing step during erythrocyte invasion, p42 is cleaved by SUB2 into p33 and p19; the latter remains attached to the merozoite surface via its GPI-anchor and is endocytosed during the subsequent ring stage.</text>
</comment>
<comment type="polymorphism">
    <text evidence="4">The sequence varies across Plasmodium strains (PubMed:2449612). There are two major dimorphic forms of MSP1, typified by those expressed by the 3D7 and Wellcome P.falciparum isolates (PubMed:2449612).</text>
</comment>
<sequence length="281" mass="31226">MKIIFFLCSFLFFIINTQCVTHESYQELVKKLEALEDAVLTGYSLFQKEKMVLNEEEITTKGASAQSGASAQSGASAQSGASAQSGTSGPSGPSGTSPSSRSNTLPRSNTSSGASPPADASDSDAKSYADLKHRVRNYLFTIKQLKYPESLDLPNHMLTLCDNIHGFKYLIDGYEEINELLYKLNFYFSLLRAKLNDVCANDYCQIPFNLKIRANELDVLKKLVFGYRKPLDNIKDNVGKMEDYIKKNKTTIANINELIEGSKKTIDQNKNADNEEGKKKI</sequence>
<reference key="1">
    <citation type="journal article" date="1988" name="Mol. Biochem. Parasitol.">
        <title>Variation in the precursor to the major merozoite surface antigens of Plasmodium falciparum.</title>
        <authorList>
            <person name="Peterson M.G."/>
            <person name="Coppel R.L."/>
            <person name="McIntyre P."/>
            <person name="Langford C.J."/>
            <person name="Woodrow G."/>
            <person name="Brown G.V."/>
            <person name="Anders R.F."/>
            <person name="Kemp D.J."/>
        </authorList>
    </citation>
    <scope>NUCLEOTIDE SEQUENCE [MRNA]</scope>
    <scope>POLYMORPHISM</scope>
</reference>
<protein>
    <recommendedName>
        <fullName evidence="1">Merozoite surface protein 1</fullName>
    </recommendedName>
    <alternativeName>
        <fullName evidence="5">Merozoite surface antigen</fullName>
    </alternativeName>
    <alternativeName>
        <fullName evidence="5">PMMSA</fullName>
    </alternativeName>
</protein>
<name>MSP1_PLAFN</name>
<accession>P13820</accession>
<dbReference type="EMBL" id="M19144">
    <property type="protein sequence ID" value="AAA29654.1"/>
    <property type="molecule type" value="mRNA"/>
</dbReference>
<dbReference type="PIR" id="B54498">
    <property type="entry name" value="B54498"/>
</dbReference>
<dbReference type="SMR" id="P13820"/>
<dbReference type="GlyCosmos" id="P13820">
    <property type="glycosylation" value="2 sites, No reported glycans"/>
</dbReference>
<dbReference type="GO" id="GO:0005576">
    <property type="term" value="C:extracellular region"/>
    <property type="evidence" value="ECO:0007669"/>
    <property type="project" value="UniProtKB-SubCell"/>
</dbReference>
<dbReference type="GO" id="GO:0005886">
    <property type="term" value="C:plasma membrane"/>
    <property type="evidence" value="ECO:0007669"/>
    <property type="project" value="UniProtKB-SubCell"/>
</dbReference>
<dbReference type="GO" id="GO:0098552">
    <property type="term" value="C:side of membrane"/>
    <property type="evidence" value="ECO:0007669"/>
    <property type="project" value="UniProtKB-KW"/>
</dbReference>
<evidence type="ECO:0000250" key="1">
    <source>
        <dbReference type="UniProtKB" id="Q8I0U8"/>
    </source>
</evidence>
<evidence type="ECO:0000255" key="2"/>
<evidence type="ECO:0000256" key="3">
    <source>
        <dbReference type="SAM" id="MobiDB-lite"/>
    </source>
</evidence>
<evidence type="ECO:0000269" key="4">
    <source>
    </source>
</evidence>
<evidence type="ECO:0000303" key="5">
    <source>
    </source>
</evidence>
<gene>
    <name evidence="1" type="primary">MSP1</name>
</gene>
<feature type="signal peptide" evidence="2">
    <location>
        <begin position="1"/>
        <end position="19"/>
    </location>
</feature>
<feature type="chain" id="PRO_0000024558" description="Merozoite surface protein 1">
    <location>
        <begin position="20"/>
        <end position="281" status="greater than"/>
    </location>
</feature>
<feature type="region of interest" description="Disordered" evidence="3">
    <location>
        <begin position="63"/>
        <end position="126"/>
    </location>
</feature>
<feature type="compositionally biased region" description="Low complexity" evidence="3">
    <location>
        <begin position="63"/>
        <end position="100"/>
    </location>
</feature>
<feature type="compositionally biased region" description="Polar residues" evidence="3">
    <location>
        <begin position="101"/>
        <end position="110"/>
    </location>
</feature>
<feature type="compositionally biased region" description="Low complexity" evidence="3">
    <location>
        <begin position="111"/>
        <end position="120"/>
    </location>
</feature>
<feature type="glycosylation site" description="N-linked (GlcNAc...) asparagine" evidence="2">
    <location>
        <position position="109"/>
    </location>
</feature>
<feature type="glycosylation site" description="N-linked (GlcNAc...) asparagine" evidence="2">
    <location>
        <position position="248"/>
    </location>
</feature>
<feature type="non-terminal residue">
    <location>
        <position position="281"/>
    </location>
</feature>
<organism>
    <name type="scientific">Plasmodium falciparum (isolate NF7 / Ghana)</name>
    <dbReference type="NCBI Taxonomy" id="5842"/>
    <lineage>
        <taxon>Eukaryota</taxon>
        <taxon>Sar</taxon>
        <taxon>Alveolata</taxon>
        <taxon>Apicomplexa</taxon>
        <taxon>Aconoidasida</taxon>
        <taxon>Haemosporida</taxon>
        <taxon>Plasmodiidae</taxon>
        <taxon>Plasmodium</taxon>
        <taxon>Plasmodium (Laverania)</taxon>
    </lineage>
</organism>
<proteinExistence type="evidence at transcript level"/>
<keyword id="KW-1003">Cell membrane</keyword>
<keyword id="KW-0245">EGF-like domain</keyword>
<keyword id="KW-0325">Glycoprotein</keyword>
<keyword id="KW-0336">GPI-anchor</keyword>
<keyword id="KW-0449">Lipoprotein</keyword>
<keyword id="KW-0461">Malaria</keyword>
<keyword id="KW-0472">Membrane</keyword>
<keyword id="KW-0477">Merozoite</keyword>
<keyword id="KW-0677">Repeat</keyword>
<keyword id="KW-0964">Secreted</keyword>
<keyword id="KW-0732">Signal</keyword>